<sequence>MSLFDTINAGGAELLGFAWPTVWAVVRILVVSVVILLCVAYLILWERKLIGWMHVRLGPNRVGPGGLLQPIADVLKLLLKEVIQPSAASRWLYLIAPVMTVVPAFAVWAVIPFQAEAVLANVNAGLLYAMAISSIGVYAVILAGWASNSKYAFLGAMRAAAQMVSYEISMGFALVLVLMTAGSLNLSEIVGSQQHGFFAGHGVNFLSWNWLPLLPAFVVYFISGIAETNRHPFDVVEGESEIVAGHMIDYSGMAFALFFLAEYINMIVISALAATLFLGGWDAPFEFLSFIPGIFWLVLKVFALLSVFIWVRATFPRYRYDQIMRLGWKVFLPVTVVWVIVVGFWMMSPLNIWVK</sequence>
<gene>
    <name evidence="1" type="primary">nuoH</name>
    <name type="ordered locus">Bcen_1630</name>
</gene>
<organism>
    <name type="scientific">Burkholderia orbicola (strain AU 1054)</name>
    <dbReference type="NCBI Taxonomy" id="331271"/>
    <lineage>
        <taxon>Bacteria</taxon>
        <taxon>Pseudomonadati</taxon>
        <taxon>Pseudomonadota</taxon>
        <taxon>Betaproteobacteria</taxon>
        <taxon>Burkholderiales</taxon>
        <taxon>Burkholderiaceae</taxon>
        <taxon>Burkholderia</taxon>
        <taxon>Burkholderia cepacia complex</taxon>
        <taxon>Burkholderia orbicola</taxon>
    </lineage>
</organism>
<comment type="function">
    <text evidence="1">NDH-1 shuttles electrons from NADH, via FMN and iron-sulfur (Fe-S) centers, to quinones in the respiratory chain. The immediate electron acceptor for the enzyme in this species is believed to be ubiquinone. Couples the redox reaction to proton translocation (for every two electrons transferred, four hydrogen ions are translocated across the cytoplasmic membrane), and thus conserves the redox energy in a proton gradient. This subunit may bind ubiquinone.</text>
</comment>
<comment type="catalytic activity">
    <reaction evidence="1">
        <text>a quinone + NADH + 5 H(+)(in) = a quinol + NAD(+) + 4 H(+)(out)</text>
        <dbReference type="Rhea" id="RHEA:57888"/>
        <dbReference type="ChEBI" id="CHEBI:15378"/>
        <dbReference type="ChEBI" id="CHEBI:24646"/>
        <dbReference type="ChEBI" id="CHEBI:57540"/>
        <dbReference type="ChEBI" id="CHEBI:57945"/>
        <dbReference type="ChEBI" id="CHEBI:132124"/>
    </reaction>
</comment>
<comment type="subunit">
    <text evidence="1">NDH-1 is composed of 14 different subunits. Subunits NuoA, H, J, K, L, M, N constitute the membrane sector of the complex.</text>
</comment>
<comment type="subcellular location">
    <subcellularLocation>
        <location evidence="1">Cell inner membrane</location>
        <topology evidence="1">Multi-pass membrane protein</topology>
    </subcellularLocation>
</comment>
<comment type="similarity">
    <text evidence="1">Belongs to the complex I subunit 1 family.</text>
</comment>
<name>NUOH_BURO1</name>
<evidence type="ECO:0000255" key="1">
    <source>
        <dbReference type="HAMAP-Rule" id="MF_01350"/>
    </source>
</evidence>
<keyword id="KW-0997">Cell inner membrane</keyword>
<keyword id="KW-1003">Cell membrane</keyword>
<keyword id="KW-0472">Membrane</keyword>
<keyword id="KW-0520">NAD</keyword>
<keyword id="KW-0874">Quinone</keyword>
<keyword id="KW-1278">Translocase</keyword>
<keyword id="KW-0812">Transmembrane</keyword>
<keyword id="KW-1133">Transmembrane helix</keyword>
<keyword id="KW-0830">Ubiquinone</keyword>
<accession>Q1BV20</accession>
<proteinExistence type="inferred from homology"/>
<dbReference type="EC" id="7.1.1.-" evidence="1"/>
<dbReference type="EMBL" id="CP000378">
    <property type="protein sequence ID" value="ABF76535.1"/>
    <property type="molecule type" value="Genomic_DNA"/>
</dbReference>
<dbReference type="SMR" id="Q1BV20"/>
<dbReference type="HOGENOM" id="CLU_015134_0_1_4"/>
<dbReference type="GO" id="GO:0005886">
    <property type="term" value="C:plasma membrane"/>
    <property type="evidence" value="ECO:0007669"/>
    <property type="project" value="UniProtKB-SubCell"/>
</dbReference>
<dbReference type="GO" id="GO:0003954">
    <property type="term" value="F:NADH dehydrogenase activity"/>
    <property type="evidence" value="ECO:0007669"/>
    <property type="project" value="TreeGrafter"/>
</dbReference>
<dbReference type="GO" id="GO:0016655">
    <property type="term" value="F:oxidoreductase activity, acting on NAD(P)H, quinone or similar compound as acceptor"/>
    <property type="evidence" value="ECO:0007669"/>
    <property type="project" value="UniProtKB-UniRule"/>
</dbReference>
<dbReference type="GO" id="GO:0048038">
    <property type="term" value="F:quinone binding"/>
    <property type="evidence" value="ECO:0007669"/>
    <property type="project" value="UniProtKB-KW"/>
</dbReference>
<dbReference type="GO" id="GO:0009060">
    <property type="term" value="P:aerobic respiration"/>
    <property type="evidence" value="ECO:0007669"/>
    <property type="project" value="TreeGrafter"/>
</dbReference>
<dbReference type="HAMAP" id="MF_01350">
    <property type="entry name" value="NDH1_NuoH"/>
    <property type="match status" value="1"/>
</dbReference>
<dbReference type="InterPro" id="IPR001694">
    <property type="entry name" value="NADH_UbQ_OxRdtase_su1/FPO"/>
</dbReference>
<dbReference type="InterPro" id="IPR018086">
    <property type="entry name" value="NADH_UbQ_OxRdtase_su1_CS"/>
</dbReference>
<dbReference type="NCBIfam" id="NF004741">
    <property type="entry name" value="PRK06076.1-2"/>
    <property type="match status" value="1"/>
</dbReference>
<dbReference type="NCBIfam" id="NF004742">
    <property type="entry name" value="PRK06076.1-3"/>
    <property type="match status" value="1"/>
</dbReference>
<dbReference type="PANTHER" id="PTHR11432">
    <property type="entry name" value="NADH DEHYDROGENASE SUBUNIT 1"/>
    <property type="match status" value="1"/>
</dbReference>
<dbReference type="PANTHER" id="PTHR11432:SF3">
    <property type="entry name" value="NADH-UBIQUINONE OXIDOREDUCTASE CHAIN 1"/>
    <property type="match status" value="1"/>
</dbReference>
<dbReference type="Pfam" id="PF00146">
    <property type="entry name" value="NADHdh"/>
    <property type="match status" value="1"/>
</dbReference>
<dbReference type="PROSITE" id="PS00668">
    <property type="entry name" value="COMPLEX1_ND1_2"/>
    <property type="match status" value="1"/>
</dbReference>
<reference key="1">
    <citation type="submission" date="2006-05" db="EMBL/GenBank/DDBJ databases">
        <title>Complete sequence of chromosome 1 of Burkholderia cenocepacia AU 1054.</title>
        <authorList>
            <consortium name="US DOE Joint Genome Institute"/>
            <person name="Copeland A."/>
            <person name="Lucas S."/>
            <person name="Lapidus A."/>
            <person name="Barry K."/>
            <person name="Detter J.C."/>
            <person name="Glavina del Rio T."/>
            <person name="Hammon N."/>
            <person name="Israni S."/>
            <person name="Dalin E."/>
            <person name="Tice H."/>
            <person name="Pitluck S."/>
            <person name="Chain P."/>
            <person name="Malfatti S."/>
            <person name="Shin M."/>
            <person name="Vergez L."/>
            <person name="Schmutz J."/>
            <person name="Larimer F."/>
            <person name="Land M."/>
            <person name="Hauser L."/>
            <person name="Kyrpides N."/>
            <person name="Lykidis A."/>
            <person name="LiPuma J.J."/>
            <person name="Konstantinidis K."/>
            <person name="Tiedje J.M."/>
            <person name="Richardson P."/>
        </authorList>
    </citation>
    <scope>NUCLEOTIDE SEQUENCE [LARGE SCALE GENOMIC DNA]</scope>
    <source>
        <strain>AU 1054</strain>
    </source>
</reference>
<protein>
    <recommendedName>
        <fullName evidence="1">NADH-quinone oxidoreductase subunit H</fullName>
        <ecNumber evidence="1">7.1.1.-</ecNumber>
    </recommendedName>
    <alternativeName>
        <fullName evidence="1">NADH dehydrogenase I subunit H</fullName>
    </alternativeName>
    <alternativeName>
        <fullName evidence="1">NDH-1 subunit H</fullName>
    </alternativeName>
</protein>
<feature type="chain" id="PRO_0000298798" description="NADH-quinone oxidoreductase subunit H">
    <location>
        <begin position="1"/>
        <end position="355"/>
    </location>
</feature>
<feature type="transmembrane region" description="Helical" evidence="1">
    <location>
        <begin position="25"/>
        <end position="45"/>
    </location>
</feature>
<feature type="transmembrane region" description="Helical" evidence="1">
    <location>
        <begin position="91"/>
        <end position="111"/>
    </location>
</feature>
<feature type="transmembrane region" description="Helical" evidence="1">
    <location>
        <begin position="126"/>
        <end position="146"/>
    </location>
</feature>
<feature type="transmembrane region" description="Helical" evidence="1">
    <location>
        <begin position="170"/>
        <end position="190"/>
    </location>
</feature>
<feature type="transmembrane region" description="Helical" evidence="1">
    <location>
        <begin position="205"/>
        <end position="225"/>
    </location>
</feature>
<feature type="transmembrane region" description="Helical" evidence="1">
    <location>
        <begin position="253"/>
        <end position="273"/>
    </location>
</feature>
<feature type="transmembrane region" description="Helical" evidence="1">
    <location>
        <begin position="290"/>
        <end position="310"/>
    </location>
</feature>
<feature type="transmembrane region" description="Helical" evidence="1">
    <location>
        <begin position="330"/>
        <end position="350"/>
    </location>
</feature>